<dbReference type="EC" id="2.7.8.13" evidence="1"/>
<dbReference type="EMBL" id="CP000548">
    <property type="protein sequence ID" value="ABO04336.1"/>
    <property type="molecule type" value="Genomic_DNA"/>
</dbReference>
<dbReference type="RefSeq" id="WP_004194370.1">
    <property type="nucleotide sequence ID" value="NZ_CP007802.1"/>
</dbReference>
<dbReference type="SMR" id="A3MR60"/>
<dbReference type="GeneID" id="92980246"/>
<dbReference type="KEGG" id="bmaz:BM44_140"/>
<dbReference type="KEGG" id="bmn:BMA10247_3229"/>
<dbReference type="PATRIC" id="fig|320389.8.peg.149"/>
<dbReference type="UniPathway" id="UPA00219"/>
<dbReference type="GO" id="GO:0005886">
    <property type="term" value="C:plasma membrane"/>
    <property type="evidence" value="ECO:0007669"/>
    <property type="project" value="UniProtKB-SubCell"/>
</dbReference>
<dbReference type="GO" id="GO:0046872">
    <property type="term" value="F:metal ion binding"/>
    <property type="evidence" value="ECO:0007669"/>
    <property type="project" value="UniProtKB-KW"/>
</dbReference>
<dbReference type="GO" id="GO:0008963">
    <property type="term" value="F:phospho-N-acetylmuramoyl-pentapeptide-transferase activity"/>
    <property type="evidence" value="ECO:0007669"/>
    <property type="project" value="UniProtKB-UniRule"/>
</dbReference>
<dbReference type="GO" id="GO:0051992">
    <property type="term" value="F:UDP-N-acetylmuramoyl-L-alanyl-D-glutamyl-meso-2,6-diaminopimelyl-D-alanyl-D-alanine:undecaprenyl-phosphate transferase activity"/>
    <property type="evidence" value="ECO:0007669"/>
    <property type="project" value="RHEA"/>
</dbReference>
<dbReference type="GO" id="GO:0051301">
    <property type="term" value="P:cell division"/>
    <property type="evidence" value="ECO:0007669"/>
    <property type="project" value="UniProtKB-KW"/>
</dbReference>
<dbReference type="GO" id="GO:0071555">
    <property type="term" value="P:cell wall organization"/>
    <property type="evidence" value="ECO:0007669"/>
    <property type="project" value="UniProtKB-KW"/>
</dbReference>
<dbReference type="GO" id="GO:0009252">
    <property type="term" value="P:peptidoglycan biosynthetic process"/>
    <property type="evidence" value="ECO:0007669"/>
    <property type="project" value="UniProtKB-UniRule"/>
</dbReference>
<dbReference type="GO" id="GO:0008360">
    <property type="term" value="P:regulation of cell shape"/>
    <property type="evidence" value="ECO:0007669"/>
    <property type="project" value="UniProtKB-KW"/>
</dbReference>
<dbReference type="CDD" id="cd06852">
    <property type="entry name" value="GT_MraY"/>
    <property type="match status" value="1"/>
</dbReference>
<dbReference type="HAMAP" id="MF_00038">
    <property type="entry name" value="MraY"/>
    <property type="match status" value="1"/>
</dbReference>
<dbReference type="InterPro" id="IPR000715">
    <property type="entry name" value="Glycosyl_transferase_4"/>
</dbReference>
<dbReference type="InterPro" id="IPR003524">
    <property type="entry name" value="PNAcMuramoyl-5peptid_Trfase"/>
</dbReference>
<dbReference type="InterPro" id="IPR018480">
    <property type="entry name" value="PNAcMuramoyl-5peptid_Trfase_CS"/>
</dbReference>
<dbReference type="NCBIfam" id="TIGR00445">
    <property type="entry name" value="mraY"/>
    <property type="match status" value="1"/>
</dbReference>
<dbReference type="PANTHER" id="PTHR22926">
    <property type="entry name" value="PHOSPHO-N-ACETYLMURAMOYL-PENTAPEPTIDE-TRANSFERASE"/>
    <property type="match status" value="1"/>
</dbReference>
<dbReference type="PANTHER" id="PTHR22926:SF5">
    <property type="entry name" value="PHOSPHO-N-ACETYLMURAMOYL-PENTAPEPTIDE-TRANSFERASE HOMOLOG"/>
    <property type="match status" value="1"/>
</dbReference>
<dbReference type="Pfam" id="PF00953">
    <property type="entry name" value="Glycos_transf_4"/>
    <property type="match status" value="1"/>
</dbReference>
<dbReference type="Pfam" id="PF10555">
    <property type="entry name" value="MraY_sig1"/>
    <property type="match status" value="1"/>
</dbReference>
<dbReference type="PROSITE" id="PS01347">
    <property type="entry name" value="MRAY_1"/>
    <property type="match status" value="1"/>
</dbReference>
<dbReference type="PROSITE" id="PS01348">
    <property type="entry name" value="MRAY_2"/>
    <property type="match status" value="1"/>
</dbReference>
<feature type="chain" id="PRO_1000002947" description="Phospho-N-acetylmuramoyl-pentapeptide-transferase">
    <location>
        <begin position="1"/>
        <end position="389"/>
    </location>
</feature>
<feature type="transmembrane region" description="Helical" evidence="1">
    <location>
        <begin position="25"/>
        <end position="45"/>
    </location>
</feature>
<feature type="transmembrane region" description="Helical" evidence="1">
    <location>
        <begin position="73"/>
        <end position="93"/>
    </location>
</feature>
<feature type="transmembrane region" description="Helical" evidence="1">
    <location>
        <begin position="97"/>
        <end position="117"/>
    </location>
</feature>
<feature type="transmembrane region" description="Helical" evidence="1">
    <location>
        <begin position="135"/>
        <end position="155"/>
    </location>
</feature>
<feature type="transmembrane region" description="Helical" evidence="1">
    <location>
        <begin position="190"/>
        <end position="210"/>
    </location>
</feature>
<feature type="transmembrane region" description="Helical" evidence="1">
    <location>
        <begin position="222"/>
        <end position="242"/>
    </location>
</feature>
<feature type="transmembrane region" description="Helical" evidence="1">
    <location>
        <begin position="258"/>
        <end position="278"/>
    </location>
</feature>
<feature type="transmembrane region" description="Helical" evidence="1">
    <location>
        <begin position="286"/>
        <end position="306"/>
    </location>
</feature>
<feature type="transmembrane region" description="Helical" evidence="1">
    <location>
        <begin position="311"/>
        <end position="331"/>
    </location>
</feature>
<feature type="transmembrane region" description="Helical" evidence="1">
    <location>
        <begin position="366"/>
        <end position="386"/>
    </location>
</feature>
<name>MRAY_BURM7</name>
<keyword id="KW-0131">Cell cycle</keyword>
<keyword id="KW-0132">Cell division</keyword>
<keyword id="KW-0997">Cell inner membrane</keyword>
<keyword id="KW-1003">Cell membrane</keyword>
<keyword id="KW-0133">Cell shape</keyword>
<keyword id="KW-0961">Cell wall biogenesis/degradation</keyword>
<keyword id="KW-0460">Magnesium</keyword>
<keyword id="KW-0472">Membrane</keyword>
<keyword id="KW-0479">Metal-binding</keyword>
<keyword id="KW-0573">Peptidoglycan synthesis</keyword>
<keyword id="KW-0808">Transferase</keyword>
<keyword id="KW-0812">Transmembrane</keyword>
<keyword id="KW-1133">Transmembrane helix</keyword>
<evidence type="ECO:0000255" key="1">
    <source>
        <dbReference type="HAMAP-Rule" id="MF_00038"/>
    </source>
</evidence>
<protein>
    <recommendedName>
        <fullName evidence="1">Phospho-N-acetylmuramoyl-pentapeptide-transferase</fullName>
        <ecNumber evidence="1">2.7.8.13</ecNumber>
    </recommendedName>
    <alternativeName>
        <fullName evidence="1">UDP-MurNAc-pentapeptide phosphotransferase</fullName>
    </alternativeName>
</protein>
<reference key="1">
    <citation type="journal article" date="2010" name="Genome Biol. Evol.">
        <title>Continuing evolution of Burkholderia mallei through genome reduction and large-scale rearrangements.</title>
        <authorList>
            <person name="Losada L."/>
            <person name="Ronning C.M."/>
            <person name="DeShazer D."/>
            <person name="Woods D."/>
            <person name="Fedorova N."/>
            <person name="Kim H.S."/>
            <person name="Shabalina S.A."/>
            <person name="Pearson T.R."/>
            <person name="Brinkac L."/>
            <person name="Tan P."/>
            <person name="Nandi T."/>
            <person name="Crabtree J."/>
            <person name="Badger J."/>
            <person name="Beckstrom-Sternberg S."/>
            <person name="Saqib M."/>
            <person name="Schutzer S.E."/>
            <person name="Keim P."/>
            <person name="Nierman W.C."/>
        </authorList>
    </citation>
    <scope>NUCLEOTIDE SEQUENCE [LARGE SCALE GENOMIC DNA]</scope>
    <source>
        <strain>NCTC 10247</strain>
    </source>
</reference>
<proteinExistence type="inferred from homology"/>
<accession>A3MR60</accession>
<organism>
    <name type="scientific">Burkholderia mallei (strain NCTC 10247)</name>
    <dbReference type="NCBI Taxonomy" id="320389"/>
    <lineage>
        <taxon>Bacteria</taxon>
        <taxon>Pseudomonadati</taxon>
        <taxon>Pseudomonadota</taxon>
        <taxon>Betaproteobacteria</taxon>
        <taxon>Burkholderiales</taxon>
        <taxon>Burkholderiaceae</taxon>
        <taxon>Burkholderia</taxon>
        <taxon>pseudomallei group</taxon>
    </lineage>
</organism>
<gene>
    <name evidence="1" type="primary">mraY</name>
    <name type="ordered locus">BMA10247_3229</name>
</gene>
<comment type="function">
    <text evidence="1">Catalyzes the initial step of the lipid cycle reactions in the biosynthesis of the cell wall peptidoglycan: transfers peptidoglycan precursor phospho-MurNAc-pentapeptide from UDP-MurNAc-pentapeptide onto the lipid carrier undecaprenyl phosphate, yielding undecaprenyl-pyrophosphoryl-MurNAc-pentapeptide, known as lipid I.</text>
</comment>
<comment type="catalytic activity">
    <reaction evidence="1">
        <text>UDP-N-acetyl-alpha-D-muramoyl-L-alanyl-gamma-D-glutamyl-meso-2,6-diaminopimeloyl-D-alanyl-D-alanine + di-trans,octa-cis-undecaprenyl phosphate = di-trans,octa-cis-undecaprenyl diphospho-N-acetyl-alpha-D-muramoyl-L-alanyl-D-glutamyl-meso-2,6-diaminopimeloyl-D-alanyl-D-alanine + UMP</text>
        <dbReference type="Rhea" id="RHEA:28386"/>
        <dbReference type="ChEBI" id="CHEBI:57865"/>
        <dbReference type="ChEBI" id="CHEBI:60392"/>
        <dbReference type="ChEBI" id="CHEBI:61386"/>
        <dbReference type="ChEBI" id="CHEBI:61387"/>
        <dbReference type="EC" id="2.7.8.13"/>
    </reaction>
</comment>
<comment type="cofactor">
    <cofactor evidence="1">
        <name>Mg(2+)</name>
        <dbReference type="ChEBI" id="CHEBI:18420"/>
    </cofactor>
</comment>
<comment type="pathway">
    <text evidence="1">Cell wall biogenesis; peptidoglycan biosynthesis.</text>
</comment>
<comment type="subcellular location">
    <subcellularLocation>
        <location evidence="1">Cell inner membrane</location>
        <topology evidence="1">Multi-pass membrane protein</topology>
    </subcellularLocation>
</comment>
<comment type="similarity">
    <text evidence="1">Belongs to the glycosyltransferase 4 family. MraY subfamily.</text>
</comment>
<sequence length="389" mass="42882">MLLALAQWLQGDASFLRLFTYLTFRAVMATITALVIGLVCGPWVIRKLTQMKVGQAVRKDGPQTHLVKSGTPTMGGVLILIGIAVATLLWGDLTNRFIWIVMLVTFGFGVIGWVDDYRKVVYKDPRGMSSREKYFWQSVIGLFAAVYLAFSVSEANNVRVFDLFMAWVRSGLSMGLPARADLMLPFLKSISYPLGVWGFIALTYFVIVGASNAVNLTDGLDGLVIMPVVLVGASLGVFAYVMGSAVYSKYLLFPHIPGAGELLIFCSAMGGAGLAFLWYNTHPAQVFMGDVGALALGGALGTVAVIVRQEIVLFIMGGIFVAETLSVMLQVTWFKYTKKRYGEGRRIFKMAPLHHHFELSGWKETQVVVRFWIITLMLCLFGLSTLKLR</sequence>